<reference key="1">
    <citation type="submission" date="2004-06" db="EMBL/GenBank/DDBJ databases">
        <authorList>
            <consortium name="NIH - Xenopus Gene Collection (XGC) project"/>
        </authorList>
    </citation>
    <scope>NUCLEOTIDE SEQUENCE [LARGE SCALE MRNA]</scope>
    <source>
        <tissue>Ovary</tissue>
    </source>
</reference>
<feature type="transit peptide" description="Mitochondrion" evidence="1">
    <location>
        <begin position="1"/>
        <end position="13"/>
    </location>
</feature>
<feature type="chain" id="PRO_0000273233" description="Large ribosomal subunit protein mL41B">
    <location>
        <begin position="14"/>
        <end position="135"/>
    </location>
</feature>
<comment type="function">
    <text evidence="2">Component of the mitochondrial ribosome large subunit. Also involved in apoptosis and cell cycle (By similarity).</text>
</comment>
<comment type="subunit">
    <text evidence="2">Component of the mitochondrial ribosome large subunit (39S) which comprises a 16S rRNA and about 50 distinct proteins.</text>
</comment>
<comment type="subcellular location">
    <subcellularLocation>
        <location evidence="2">Mitochondrion</location>
    </subcellularLocation>
</comment>
<comment type="similarity">
    <text evidence="3">Belongs to the mitochondrion-specific ribosomal protein mL41 family.</text>
</comment>
<protein>
    <recommendedName>
        <fullName evidence="3">Large ribosomal subunit protein mL41B</fullName>
    </recommendedName>
    <alternativeName>
        <fullName>39S ribosomal protein L41-B, mitochondrial</fullName>
        <shortName>L41mt-B</shortName>
        <shortName>MRP-L41-B</shortName>
    </alternativeName>
</protein>
<organism>
    <name type="scientific">Xenopus laevis</name>
    <name type="common">African clawed frog</name>
    <dbReference type="NCBI Taxonomy" id="8355"/>
    <lineage>
        <taxon>Eukaryota</taxon>
        <taxon>Metazoa</taxon>
        <taxon>Chordata</taxon>
        <taxon>Craniata</taxon>
        <taxon>Vertebrata</taxon>
        <taxon>Euteleostomi</taxon>
        <taxon>Amphibia</taxon>
        <taxon>Batrachia</taxon>
        <taxon>Anura</taxon>
        <taxon>Pipoidea</taxon>
        <taxon>Pipidae</taxon>
        <taxon>Xenopodinae</taxon>
        <taxon>Xenopus</taxon>
        <taxon>Xenopus</taxon>
    </lineage>
</organism>
<dbReference type="EMBL" id="BC072329">
    <property type="protein sequence ID" value="AAH72329.1"/>
    <property type="molecule type" value="mRNA"/>
</dbReference>
<dbReference type="SMR" id="Q6INF3"/>
<dbReference type="DNASU" id="443843"/>
<dbReference type="GeneID" id="443843"/>
<dbReference type="KEGG" id="xla:443843"/>
<dbReference type="AGR" id="Xenbase:XB-GENE-5760611"/>
<dbReference type="CTD" id="443843"/>
<dbReference type="Xenbase" id="XB-GENE-5760611">
    <property type="gene designation" value="mrpl41.S"/>
</dbReference>
<dbReference type="OMA" id="DHEGARC"/>
<dbReference type="OrthoDB" id="408933at2759"/>
<dbReference type="Proteomes" id="UP000186698">
    <property type="component" value="Chromosome 8S"/>
</dbReference>
<dbReference type="Bgee" id="443843">
    <property type="expression patterns" value="Expressed in oocyte and 20 other cell types or tissues"/>
</dbReference>
<dbReference type="GO" id="GO:0005762">
    <property type="term" value="C:mitochondrial large ribosomal subunit"/>
    <property type="evidence" value="ECO:0000250"/>
    <property type="project" value="UniProtKB"/>
</dbReference>
<dbReference type="GO" id="GO:1990904">
    <property type="term" value="C:ribonucleoprotein complex"/>
    <property type="evidence" value="ECO:0000250"/>
    <property type="project" value="UniProtKB"/>
</dbReference>
<dbReference type="GO" id="GO:0003735">
    <property type="term" value="F:structural constituent of ribosome"/>
    <property type="evidence" value="ECO:0000250"/>
    <property type="project" value="UniProtKB"/>
</dbReference>
<dbReference type="GO" id="GO:0006915">
    <property type="term" value="P:apoptotic process"/>
    <property type="evidence" value="ECO:0007669"/>
    <property type="project" value="UniProtKB-KW"/>
</dbReference>
<dbReference type="GO" id="GO:0006412">
    <property type="term" value="P:translation"/>
    <property type="evidence" value="ECO:0000250"/>
    <property type="project" value="UniProtKB"/>
</dbReference>
<dbReference type="InterPro" id="IPR019189">
    <property type="entry name" value="Ribosomal_mL41"/>
</dbReference>
<dbReference type="PANTHER" id="PTHR21338:SF0">
    <property type="entry name" value="LARGE RIBOSOMAL SUBUNIT PROTEIN ML41"/>
    <property type="match status" value="1"/>
</dbReference>
<dbReference type="PANTHER" id="PTHR21338">
    <property type="entry name" value="MITOCHONDRIAL RIBOSOMAL PROTEIN L41"/>
    <property type="match status" value="1"/>
</dbReference>
<dbReference type="Pfam" id="PF09809">
    <property type="entry name" value="MRP-L27"/>
    <property type="match status" value="1"/>
</dbReference>
<proteinExistence type="evidence at transcript level"/>
<gene>
    <name type="primary">mrpl41-b</name>
</gene>
<keyword id="KW-0053">Apoptosis</keyword>
<keyword id="KW-0131">Cell cycle</keyword>
<keyword id="KW-0496">Mitochondrion</keyword>
<keyword id="KW-1185">Reference proteome</keyword>
<keyword id="KW-0687">Ribonucleoprotein</keyword>
<keyword id="KW-0689">Ribosomal protein</keyword>
<keyword id="KW-0809">Transit peptide</keyword>
<evidence type="ECO:0000250" key="1"/>
<evidence type="ECO:0000250" key="2">
    <source>
        <dbReference type="UniProtKB" id="Q8IXM3"/>
    </source>
</evidence>
<evidence type="ECO:0000305" key="3"/>
<sequence>MGLITKIARGLVRGADRMAECTSKLGPNSYNKGRGAKKIGYLTSSGKFVKVREMVPVFVVPDLTGFKLKPYVSYKAPPGTEDPMTAKKLFMETVGPQIEKDLQESTFRPEDLEKYGFEPTQEGKLFKLFPRNYIQ</sequence>
<name>RM41B_XENLA</name>
<accession>Q6INF3</accession>